<organism>
    <name type="scientific">Sodalis glossinidius (strain morsitans)</name>
    <dbReference type="NCBI Taxonomy" id="343509"/>
    <lineage>
        <taxon>Bacteria</taxon>
        <taxon>Pseudomonadati</taxon>
        <taxon>Pseudomonadota</taxon>
        <taxon>Gammaproteobacteria</taxon>
        <taxon>Enterobacterales</taxon>
        <taxon>Bruguierivoracaceae</taxon>
        <taxon>Sodalis</taxon>
    </lineage>
</organism>
<gene>
    <name evidence="1" type="primary">rplJ</name>
    <name type="ordered locus">SG0132</name>
</gene>
<proteinExistence type="inferred from homology"/>
<name>RL10_SODGM</name>
<keyword id="KW-0687">Ribonucleoprotein</keyword>
<keyword id="KW-0689">Ribosomal protein</keyword>
<keyword id="KW-0694">RNA-binding</keyword>
<keyword id="KW-0699">rRNA-binding</keyword>
<protein>
    <recommendedName>
        <fullName evidence="1">Large ribosomal subunit protein uL10</fullName>
    </recommendedName>
    <alternativeName>
        <fullName evidence="2">50S ribosomal protein L10</fullName>
    </alternativeName>
</protein>
<sequence>MALNLQDKQAIVAEVSEVAKGALSAVVADSRGVTVDKMTELRKAGREAGVYMRVVRNTLMRRVVEGTPFECLKDTFVGPTLIAFSNEHPGAAARLFKAFAKDNANFEVKAAAFEGEVISASQIDRLATLPTYEEAIARLMSAMKEASAGKLVRTLAALRDQKEAA</sequence>
<feature type="chain" id="PRO_0000234889" description="Large ribosomal subunit protein uL10">
    <location>
        <begin position="1"/>
        <end position="165"/>
    </location>
</feature>
<dbReference type="EMBL" id="AP008232">
    <property type="protein sequence ID" value="BAE73407.1"/>
    <property type="molecule type" value="Genomic_DNA"/>
</dbReference>
<dbReference type="RefSeq" id="WP_011409996.1">
    <property type="nucleotide sequence ID" value="NC_007712.1"/>
</dbReference>
<dbReference type="STRING" id="343509.SG0132"/>
<dbReference type="KEGG" id="sgl:SG0132"/>
<dbReference type="eggNOG" id="COG0244">
    <property type="taxonomic scope" value="Bacteria"/>
</dbReference>
<dbReference type="HOGENOM" id="CLU_092227_0_2_6"/>
<dbReference type="OrthoDB" id="9808307at2"/>
<dbReference type="BioCyc" id="SGLO343509:SGP1_RS01115-MONOMER"/>
<dbReference type="Proteomes" id="UP000001932">
    <property type="component" value="Chromosome"/>
</dbReference>
<dbReference type="GO" id="GO:0015934">
    <property type="term" value="C:large ribosomal subunit"/>
    <property type="evidence" value="ECO:0007669"/>
    <property type="project" value="InterPro"/>
</dbReference>
<dbReference type="GO" id="GO:0070180">
    <property type="term" value="F:large ribosomal subunit rRNA binding"/>
    <property type="evidence" value="ECO:0007669"/>
    <property type="project" value="UniProtKB-UniRule"/>
</dbReference>
<dbReference type="GO" id="GO:0003735">
    <property type="term" value="F:structural constituent of ribosome"/>
    <property type="evidence" value="ECO:0007669"/>
    <property type="project" value="InterPro"/>
</dbReference>
<dbReference type="GO" id="GO:0006412">
    <property type="term" value="P:translation"/>
    <property type="evidence" value="ECO:0007669"/>
    <property type="project" value="UniProtKB-UniRule"/>
</dbReference>
<dbReference type="CDD" id="cd05797">
    <property type="entry name" value="Ribosomal_L10"/>
    <property type="match status" value="1"/>
</dbReference>
<dbReference type="FunFam" id="3.30.70.1730:FF:000001">
    <property type="entry name" value="50S ribosomal protein L10"/>
    <property type="match status" value="1"/>
</dbReference>
<dbReference type="Gene3D" id="3.30.70.1730">
    <property type="match status" value="1"/>
</dbReference>
<dbReference type="Gene3D" id="6.10.250.2350">
    <property type="match status" value="1"/>
</dbReference>
<dbReference type="HAMAP" id="MF_00362">
    <property type="entry name" value="Ribosomal_uL10"/>
    <property type="match status" value="1"/>
</dbReference>
<dbReference type="InterPro" id="IPR001790">
    <property type="entry name" value="Ribosomal_uL10"/>
</dbReference>
<dbReference type="InterPro" id="IPR043141">
    <property type="entry name" value="Ribosomal_uL10-like_sf"/>
</dbReference>
<dbReference type="InterPro" id="IPR022973">
    <property type="entry name" value="Ribosomal_uL10_bac"/>
</dbReference>
<dbReference type="InterPro" id="IPR047865">
    <property type="entry name" value="Ribosomal_uL10_bac_type"/>
</dbReference>
<dbReference type="InterPro" id="IPR002363">
    <property type="entry name" value="Ribosomal_uL10_CS_bac"/>
</dbReference>
<dbReference type="NCBIfam" id="NF000955">
    <property type="entry name" value="PRK00099.1-1"/>
    <property type="match status" value="1"/>
</dbReference>
<dbReference type="PANTHER" id="PTHR11560">
    <property type="entry name" value="39S RIBOSOMAL PROTEIN L10, MITOCHONDRIAL"/>
    <property type="match status" value="1"/>
</dbReference>
<dbReference type="Pfam" id="PF00466">
    <property type="entry name" value="Ribosomal_L10"/>
    <property type="match status" value="1"/>
</dbReference>
<dbReference type="SUPFAM" id="SSF160369">
    <property type="entry name" value="Ribosomal protein L10-like"/>
    <property type="match status" value="1"/>
</dbReference>
<dbReference type="PROSITE" id="PS01109">
    <property type="entry name" value="RIBOSOMAL_L10"/>
    <property type="match status" value="1"/>
</dbReference>
<accession>Q2NWR8</accession>
<evidence type="ECO:0000255" key="1">
    <source>
        <dbReference type="HAMAP-Rule" id="MF_00362"/>
    </source>
</evidence>
<evidence type="ECO:0000305" key="2"/>
<comment type="function">
    <text evidence="1">Forms part of the ribosomal stalk, playing a central role in the interaction of the ribosome with GTP-bound translation factors.</text>
</comment>
<comment type="subunit">
    <text evidence="1">Part of the ribosomal stalk of the 50S ribosomal subunit. The N-terminus interacts with L11 and the large rRNA to form the base of the stalk. The C-terminus forms an elongated spine to which L12 dimers bind in a sequential fashion forming a multimeric L10(L12)X complex.</text>
</comment>
<comment type="similarity">
    <text evidence="1">Belongs to the universal ribosomal protein uL10 family.</text>
</comment>
<reference key="1">
    <citation type="journal article" date="2006" name="Genome Res.">
        <title>Massive genome erosion and functional adaptations provide insights into the symbiotic lifestyle of Sodalis glossinidius in the tsetse host.</title>
        <authorList>
            <person name="Toh H."/>
            <person name="Weiss B.L."/>
            <person name="Perkin S.A.H."/>
            <person name="Yamashita A."/>
            <person name="Oshima K."/>
            <person name="Hattori M."/>
            <person name="Aksoy S."/>
        </authorList>
    </citation>
    <scope>NUCLEOTIDE SEQUENCE [LARGE SCALE GENOMIC DNA]</scope>
    <source>
        <strain>morsitans</strain>
    </source>
</reference>